<dbReference type="EC" id="4.2.3.5" evidence="1"/>
<dbReference type="EMBL" id="CP000885">
    <property type="protein sequence ID" value="ABX43449.1"/>
    <property type="molecule type" value="Genomic_DNA"/>
</dbReference>
<dbReference type="RefSeq" id="WP_012201100.1">
    <property type="nucleotide sequence ID" value="NC_010001.1"/>
</dbReference>
<dbReference type="SMR" id="A9KQX0"/>
<dbReference type="STRING" id="357809.Cphy_3093"/>
<dbReference type="KEGG" id="cpy:Cphy_3093"/>
<dbReference type="eggNOG" id="COG0082">
    <property type="taxonomic scope" value="Bacteria"/>
</dbReference>
<dbReference type="HOGENOM" id="CLU_034547_0_0_9"/>
<dbReference type="OrthoDB" id="9771806at2"/>
<dbReference type="UniPathway" id="UPA00053">
    <property type="reaction ID" value="UER00090"/>
</dbReference>
<dbReference type="Proteomes" id="UP000000370">
    <property type="component" value="Chromosome"/>
</dbReference>
<dbReference type="GO" id="GO:0005829">
    <property type="term" value="C:cytosol"/>
    <property type="evidence" value="ECO:0007669"/>
    <property type="project" value="TreeGrafter"/>
</dbReference>
<dbReference type="GO" id="GO:0004107">
    <property type="term" value="F:chorismate synthase activity"/>
    <property type="evidence" value="ECO:0007669"/>
    <property type="project" value="UniProtKB-UniRule"/>
</dbReference>
<dbReference type="GO" id="GO:0010181">
    <property type="term" value="F:FMN binding"/>
    <property type="evidence" value="ECO:0007669"/>
    <property type="project" value="TreeGrafter"/>
</dbReference>
<dbReference type="GO" id="GO:0008652">
    <property type="term" value="P:amino acid biosynthetic process"/>
    <property type="evidence" value="ECO:0007669"/>
    <property type="project" value="UniProtKB-KW"/>
</dbReference>
<dbReference type="GO" id="GO:0009073">
    <property type="term" value="P:aromatic amino acid family biosynthetic process"/>
    <property type="evidence" value="ECO:0007669"/>
    <property type="project" value="UniProtKB-KW"/>
</dbReference>
<dbReference type="GO" id="GO:0009423">
    <property type="term" value="P:chorismate biosynthetic process"/>
    <property type="evidence" value="ECO:0007669"/>
    <property type="project" value="UniProtKB-UniRule"/>
</dbReference>
<dbReference type="CDD" id="cd07304">
    <property type="entry name" value="Chorismate_synthase"/>
    <property type="match status" value="1"/>
</dbReference>
<dbReference type="FunFam" id="3.60.150.10:FF:000002">
    <property type="entry name" value="Chorismate synthase"/>
    <property type="match status" value="1"/>
</dbReference>
<dbReference type="Gene3D" id="3.60.150.10">
    <property type="entry name" value="Chorismate synthase AroC"/>
    <property type="match status" value="1"/>
</dbReference>
<dbReference type="HAMAP" id="MF_00300">
    <property type="entry name" value="Chorismate_synth"/>
    <property type="match status" value="1"/>
</dbReference>
<dbReference type="InterPro" id="IPR000453">
    <property type="entry name" value="Chorismate_synth"/>
</dbReference>
<dbReference type="InterPro" id="IPR035904">
    <property type="entry name" value="Chorismate_synth_AroC_sf"/>
</dbReference>
<dbReference type="InterPro" id="IPR020541">
    <property type="entry name" value="Chorismate_synthase_CS"/>
</dbReference>
<dbReference type="NCBIfam" id="TIGR00033">
    <property type="entry name" value="aroC"/>
    <property type="match status" value="1"/>
</dbReference>
<dbReference type="NCBIfam" id="NF003793">
    <property type="entry name" value="PRK05382.1"/>
    <property type="match status" value="1"/>
</dbReference>
<dbReference type="PANTHER" id="PTHR21085">
    <property type="entry name" value="CHORISMATE SYNTHASE"/>
    <property type="match status" value="1"/>
</dbReference>
<dbReference type="PANTHER" id="PTHR21085:SF0">
    <property type="entry name" value="CHORISMATE SYNTHASE"/>
    <property type="match status" value="1"/>
</dbReference>
<dbReference type="Pfam" id="PF01264">
    <property type="entry name" value="Chorismate_synt"/>
    <property type="match status" value="1"/>
</dbReference>
<dbReference type="PIRSF" id="PIRSF001456">
    <property type="entry name" value="Chorismate_synth"/>
    <property type="match status" value="1"/>
</dbReference>
<dbReference type="SUPFAM" id="SSF103263">
    <property type="entry name" value="Chorismate synthase, AroC"/>
    <property type="match status" value="1"/>
</dbReference>
<dbReference type="PROSITE" id="PS00787">
    <property type="entry name" value="CHORISMATE_SYNTHASE_1"/>
    <property type="match status" value="1"/>
</dbReference>
<dbReference type="PROSITE" id="PS00788">
    <property type="entry name" value="CHORISMATE_SYNTHASE_2"/>
    <property type="match status" value="1"/>
</dbReference>
<keyword id="KW-0028">Amino-acid biosynthesis</keyword>
<keyword id="KW-0057">Aromatic amino acid biosynthesis</keyword>
<keyword id="KW-0274">FAD</keyword>
<keyword id="KW-0285">Flavoprotein</keyword>
<keyword id="KW-0288">FMN</keyword>
<keyword id="KW-0456">Lyase</keyword>
<keyword id="KW-0521">NADP</keyword>
<keyword id="KW-1185">Reference proteome</keyword>
<reference key="1">
    <citation type="submission" date="2007-11" db="EMBL/GenBank/DDBJ databases">
        <title>Complete genome sequence of Clostridium phytofermentans ISDg.</title>
        <authorList>
            <person name="Leschine S.B."/>
            <person name="Warnick T.A."/>
            <person name="Blanchard J.L."/>
            <person name="Schnell D.J."/>
            <person name="Petit E.L."/>
            <person name="LaTouf W.G."/>
            <person name="Copeland A."/>
            <person name="Lucas S."/>
            <person name="Lapidus A."/>
            <person name="Barry K."/>
            <person name="Glavina del Rio T."/>
            <person name="Dalin E."/>
            <person name="Tice H."/>
            <person name="Pitluck S."/>
            <person name="Kiss H."/>
            <person name="Brettin T."/>
            <person name="Bruce D."/>
            <person name="Detter J.C."/>
            <person name="Han C."/>
            <person name="Kuske C."/>
            <person name="Schmutz J."/>
            <person name="Larimer F."/>
            <person name="Land M."/>
            <person name="Hauser L."/>
            <person name="Kyrpides N."/>
            <person name="Kim E.A."/>
            <person name="Richardson P."/>
        </authorList>
    </citation>
    <scope>NUCLEOTIDE SEQUENCE [LARGE SCALE GENOMIC DNA]</scope>
    <source>
        <strain>ATCC 700394 / DSM 18823 / ISDg</strain>
    </source>
</reference>
<organism>
    <name type="scientific">Lachnoclostridium phytofermentans (strain ATCC 700394 / DSM 18823 / ISDg)</name>
    <name type="common">Clostridium phytofermentans</name>
    <dbReference type="NCBI Taxonomy" id="357809"/>
    <lineage>
        <taxon>Bacteria</taxon>
        <taxon>Bacillati</taxon>
        <taxon>Bacillota</taxon>
        <taxon>Clostridia</taxon>
        <taxon>Lachnospirales</taxon>
        <taxon>Lachnospiraceae</taxon>
    </lineage>
</organism>
<proteinExistence type="inferred from homology"/>
<name>AROC_LACP7</name>
<protein>
    <recommendedName>
        <fullName evidence="1">Chorismate synthase</fullName>
        <shortName evidence="1">CS</shortName>
        <ecNumber evidence="1">4.2.3.5</ecNumber>
    </recommendedName>
    <alternativeName>
        <fullName evidence="1">5-enolpyruvylshikimate-3-phosphate phospholyase</fullName>
    </alternativeName>
</protein>
<feature type="chain" id="PRO_1000078990" description="Chorismate synthase">
    <location>
        <begin position="1"/>
        <end position="367"/>
    </location>
</feature>
<feature type="binding site" evidence="1">
    <location>
        <position position="48"/>
    </location>
    <ligand>
        <name>NADP(+)</name>
        <dbReference type="ChEBI" id="CHEBI:58349"/>
    </ligand>
</feature>
<feature type="binding site" evidence="1">
    <location>
        <begin position="125"/>
        <end position="127"/>
    </location>
    <ligand>
        <name>FMN</name>
        <dbReference type="ChEBI" id="CHEBI:58210"/>
    </ligand>
</feature>
<feature type="binding site" evidence="1">
    <location>
        <position position="284"/>
    </location>
    <ligand>
        <name>FMN</name>
        <dbReference type="ChEBI" id="CHEBI:58210"/>
    </ligand>
</feature>
<feature type="binding site" evidence="1">
    <location>
        <begin position="299"/>
        <end position="303"/>
    </location>
    <ligand>
        <name>FMN</name>
        <dbReference type="ChEBI" id="CHEBI:58210"/>
    </ligand>
</feature>
<feature type="binding site" evidence="1">
    <location>
        <position position="325"/>
    </location>
    <ligand>
        <name>FMN</name>
        <dbReference type="ChEBI" id="CHEBI:58210"/>
    </ligand>
</feature>
<sequence length="367" mass="39292">MSGSSFGSIFKIATWGESHGKGIGVVVDGCPAGLTLNEEMIQTFLNRRKPGQTKYSTPRKEDDLVTILSGVFEGKTTGTPISMMIANETARSADYSEIASFYRPGHADYTFDAKYGFRDYRGGGRSSGRETIGRVAAGAIAAALLKELGIEVFTYTKSIGPIQIDYHKCQKENLTLSPLCMPDLEASQKAEDYLEQCIHNLDSSGGMIECIISGVPAGIGEPVFDKLDAQLAKAIFSIGAVKGFEIGSGFEVAKQLGSENNDGFAFDANGKLIKLTNHSGGILGGISDGSEIIFRAAIKPTPSIKKEQQTVNKSGENINVSIKGRHDPIIVPRAVVVVEAMAALTLADLLLSGMSSKMDYVKKIYQK</sequence>
<gene>
    <name evidence="1" type="primary">aroC</name>
    <name type="ordered locus">Cphy_3093</name>
</gene>
<comment type="function">
    <text evidence="1">Catalyzes the anti-1,4-elimination of the C-3 phosphate and the C-6 proR hydrogen from 5-enolpyruvylshikimate-3-phosphate (EPSP) to yield chorismate, which is the branch point compound that serves as the starting substrate for the three terminal pathways of aromatic amino acid biosynthesis. This reaction introduces a second double bond into the aromatic ring system.</text>
</comment>
<comment type="catalytic activity">
    <reaction evidence="1">
        <text>5-O-(1-carboxyvinyl)-3-phosphoshikimate = chorismate + phosphate</text>
        <dbReference type="Rhea" id="RHEA:21020"/>
        <dbReference type="ChEBI" id="CHEBI:29748"/>
        <dbReference type="ChEBI" id="CHEBI:43474"/>
        <dbReference type="ChEBI" id="CHEBI:57701"/>
        <dbReference type="EC" id="4.2.3.5"/>
    </reaction>
</comment>
<comment type="cofactor">
    <cofactor evidence="1">
        <name>FMNH2</name>
        <dbReference type="ChEBI" id="CHEBI:57618"/>
    </cofactor>
    <text evidence="1">Reduced FMN (FMNH(2)).</text>
</comment>
<comment type="pathway">
    <text evidence="1">Metabolic intermediate biosynthesis; chorismate biosynthesis; chorismate from D-erythrose 4-phosphate and phosphoenolpyruvate: step 7/7.</text>
</comment>
<comment type="subunit">
    <text evidence="1">Homotetramer.</text>
</comment>
<comment type="similarity">
    <text evidence="1">Belongs to the chorismate synthase family.</text>
</comment>
<accession>A9KQX0</accession>
<evidence type="ECO:0000255" key="1">
    <source>
        <dbReference type="HAMAP-Rule" id="MF_00300"/>
    </source>
</evidence>